<accession>A9BWI4</accession>
<organism>
    <name type="scientific">Delftia acidovorans (strain DSM 14801 / SPH-1)</name>
    <dbReference type="NCBI Taxonomy" id="398578"/>
    <lineage>
        <taxon>Bacteria</taxon>
        <taxon>Pseudomonadati</taxon>
        <taxon>Pseudomonadota</taxon>
        <taxon>Betaproteobacteria</taxon>
        <taxon>Burkholderiales</taxon>
        <taxon>Comamonadaceae</taxon>
        <taxon>Delftia</taxon>
    </lineage>
</organism>
<evidence type="ECO:0000255" key="1">
    <source>
        <dbReference type="HAMAP-Rule" id="MF_00409"/>
    </source>
</evidence>
<gene>
    <name evidence="1" type="primary">lpxK</name>
    <name type="ordered locus">Daci_3570</name>
</gene>
<protein>
    <recommendedName>
        <fullName evidence="1">Tetraacyldisaccharide 4'-kinase</fullName>
        <ecNumber evidence="1">2.7.1.130</ecNumber>
    </recommendedName>
    <alternativeName>
        <fullName evidence="1">Lipid A 4'-kinase</fullName>
    </alternativeName>
</protein>
<proteinExistence type="inferred from homology"/>
<comment type="function">
    <text evidence="1">Transfers the gamma-phosphate of ATP to the 4'-position of a tetraacyldisaccharide 1-phosphate intermediate (termed DS-1-P) to form tetraacyldisaccharide 1,4'-bis-phosphate (lipid IVA).</text>
</comment>
<comment type="catalytic activity">
    <reaction evidence="1">
        <text>a lipid A disaccharide + ATP = a lipid IVA + ADP + H(+)</text>
        <dbReference type="Rhea" id="RHEA:67840"/>
        <dbReference type="ChEBI" id="CHEBI:15378"/>
        <dbReference type="ChEBI" id="CHEBI:30616"/>
        <dbReference type="ChEBI" id="CHEBI:176343"/>
        <dbReference type="ChEBI" id="CHEBI:176425"/>
        <dbReference type="ChEBI" id="CHEBI:456216"/>
        <dbReference type="EC" id="2.7.1.130"/>
    </reaction>
</comment>
<comment type="pathway">
    <text evidence="1">Glycolipid biosynthesis; lipid IV(A) biosynthesis; lipid IV(A) from (3R)-3-hydroxytetradecanoyl-[acyl-carrier-protein] and UDP-N-acetyl-alpha-D-glucosamine: step 6/6.</text>
</comment>
<comment type="similarity">
    <text evidence="1">Belongs to the LpxK family.</text>
</comment>
<name>LPXK_DELAS</name>
<reference key="1">
    <citation type="submission" date="2007-11" db="EMBL/GenBank/DDBJ databases">
        <title>Complete sequence of Delftia acidovorans DSM 14801 / SPH-1.</title>
        <authorList>
            <person name="Copeland A."/>
            <person name="Lucas S."/>
            <person name="Lapidus A."/>
            <person name="Barry K."/>
            <person name="Glavina del Rio T."/>
            <person name="Dalin E."/>
            <person name="Tice H."/>
            <person name="Pitluck S."/>
            <person name="Lowry S."/>
            <person name="Clum A."/>
            <person name="Schmutz J."/>
            <person name="Larimer F."/>
            <person name="Land M."/>
            <person name="Hauser L."/>
            <person name="Kyrpides N."/>
            <person name="Kim E."/>
            <person name="Schleheck D."/>
            <person name="Richardson P."/>
        </authorList>
    </citation>
    <scope>NUCLEOTIDE SEQUENCE [LARGE SCALE GENOMIC DNA]</scope>
    <source>
        <strain>DSM 14801 / SPH-1</strain>
    </source>
</reference>
<sequence>MPGNGPAPAARGLRAAWRHRGPLACALLPLSLLYRALLGLHRLPYALGFRRAGQAGIPVIVVGNVIAGGAGKTPVTLALARHLRDSGWSPGIVSRGYGRSTDDCREATPESAPADVGDEPALLARASGVPVFVARKRIEAVQALRARHSQVDVVISDDGLQHLALARDIELCVFNDDGIGNGWLLPAGPLREPWPRPVTAVLHAGACPPTDAPAFAMQRQLAAEGVNAHGERIPLAALRGRPVEAVAAVARPEGFFSMLASEQDLALEHAQALPDHYNFESFQRLGRNEDPLVCTEKDAVKLWRTHPQAWSVALQLQLPPDFWALLDQRLQALRRPRA</sequence>
<keyword id="KW-0067">ATP-binding</keyword>
<keyword id="KW-0418">Kinase</keyword>
<keyword id="KW-0441">Lipid A biosynthesis</keyword>
<keyword id="KW-0444">Lipid biosynthesis</keyword>
<keyword id="KW-0443">Lipid metabolism</keyword>
<keyword id="KW-0547">Nucleotide-binding</keyword>
<keyword id="KW-1185">Reference proteome</keyword>
<keyword id="KW-0808">Transferase</keyword>
<feature type="chain" id="PRO_1000205965" description="Tetraacyldisaccharide 4'-kinase">
    <location>
        <begin position="1"/>
        <end position="338"/>
    </location>
</feature>
<feature type="binding site" evidence="1">
    <location>
        <begin position="66"/>
        <end position="73"/>
    </location>
    <ligand>
        <name>ATP</name>
        <dbReference type="ChEBI" id="CHEBI:30616"/>
    </ligand>
</feature>
<dbReference type="EC" id="2.7.1.130" evidence="1"/>
<dbReference type="EMBL" id="CP000884">
    <property type="protein sequence ID" value="ABX36204.1"/>
    <property type="molecule type" value="Genomic_DNA"/>
</dbReference>
<dbReference type="RefSeq" id="WP_012205404.1">
    <property type="nucleotide sequence ID" value="NC_010002.1"/>
</dbReference>
<dbReference type="SMR" id="A9BWI4"/>
<dbReference type="STRING" id="398578.Daci_3570"/>
<dbReference type="GeneID" id="24114865"/>
<dbReference type="KEGG" id="dac:Daci_3570"/>
<dbReference type="eggNOG" id="COG1663">
    <property type="taxonomic scope" value="Bacteria"/>
</dbReference>
<dbReference type="HOGENOM" id="CLU_038816_2_0_4"/>
<dbReference type="UniPathway" id="UPA00359">
    <property type="reaction ID" value="UER00482"/>
</dbReference>
<dbReference type="Proteomes" id="UP000000784">
    <property type="component" value="Chromosome"/>
</dbReference>
<dbReference type="GO" id="GO:0005886">
    <property type="term" value="C:plasma membrane"/>
    <property type="evidence" value="ECO:0007669"/>
    <property type="project" value="TreeGrafter"/>
</dbReference>
<dbReference type="GO" id="GO:0005524">
    <property type="term" value="F:ATP binding"/>
    <property type="evidence" value="ECO:0007669"/>
    <property type="project" value="UniProtKB-UniRule"/>
</dbReference>
<dbReference type="GO" id="GO:0009029">
    <property type="term" value="F:tetraacyldisaccharide 4'-kinase activity"/>
    <property type="evidence" value="ECO:0007669"/>
    <property type="project" value="UniProtKB-UniRule"/>
</dbReference>
<dbReference type="GO" id="GO:0009245">
    <property type="term" value="P:lipid A biosynthetic process"/>
    <property type="evidence" value="ECO:0007669"/>
    <property type="project" value="UniProtKB-UniRule"/>
</dbReference>
<dbReference type="GO" id="GO:0009244">
    <property type="term" value="P:lipopolysaccharide core region biosynthetic process"/>
    <property type="evidence" value="ECO:0007669"/>
    <property type="project" value="TreeGrafter"/>
</dbReference>
<dbReference type="CDD" id="cd01983">
    <property type="entry name" value="SIMIBI"/>
    <property type="match status" value="1"/>
</dbReference>
<dbReference type="HAMAP" id="MF_00409">
    <property type="entry name" value="LpxK"/>
    <property type="match status" value="1"/>
</dbReference>
<dbReference type="InterPro" id="IPR003758">
    <property type="entry name" value="LpxK"/>
</dbReference>
<dbReference type="InterPro" id="IPR027417">
    <property type="entry name" value="P-loop_NTPase"/>
</dbReference>
<dbReference type="NCBIfam" id="TIGR00682">
    <property type="entry name" value="lpxK"/>
    <property type="match status" value="1"/>
</dbReference>
<dbReference type="PANTHER" id="PTHR42724">
    <property type="entry name" value="TETRAACYLDISACCHARIDE 4'-KINASE"/>
    <property type="match status" value="1"/>
</dbReference>
<dbReference type="PANTHER" id="PTHR42724:SF1">
    <property type="entry name" value="TETRAACYLDISACCHARIDE 4'-KINASE, MITOCHONDRIAL-RELATED"/>
    <property type="match status" value="1"/>
</dbReference>
<dbReference type="Pfam" id="PF02606">
    <property type="entry name" value="LpxK"/>
    <property type="match status" value="1"/>
</dbReference>
<dbReference type="SUPFAM" id="SSF52540">
    <property type="entry name" value="P-loop containing nucleoside triphosphate hydrolases"/>
    <property type="match status" value="1"/>
</dbReference>